<feature type="chain" id="PRO_1000083170" description="Probable transcriptional regulatory protein Strop_1792">
    <location>
        <begin position="1"/>
        <end position="249"/>
    </location>
</feature>
<protein>
    <recommendedName>
        <fullName evidence="1">Probable transcriptional regulatory protein Strop_1792</fullName>
    </recommendedName>
</protein>
<sequence length="249" mass="26324">MSGHSKWATTKHKKAVIDAKRGKMFAKLIKNVEVAARTGGGDPAGNPTLYDAIQKAKKNSVPNDNIDRAVKRGSGLESGGADYQTVMYEGYGPNGVALLIECLTDNRNRAATEVRTALTRNGGSFADAGSVSYLFSRKGVVIVAKAGTTEDDVMLAVLDAGAEEVNDLGEAFEVLSEPGDLVAVRTALQDAGIEYESAESSLVPSVSVPVDEEGARKILKLIDVLEDCDDVQNVFANFDASDELLAKLG</sequence>
<comment type="subcellular location">
    <subcellularLocation>
        <location evidence="1">Cytoplasm</location>
    </subcellularLocation>
</comment>
<comment type="similarity">
    <text evidence="1">Belongs to the TACO1 family.</text>
</comment>
<proteinExistence type="inferred from homology"/>
<accession>A4X5V5</accession>
<evidence type="ECO:0000255" key="1">
    <source>
        <dbReference type="HAMAP-Rule" id="MF_00693"/>
    </source>
</evidence>
<name>Y1792_SALTO</name>
<keyword id="KW-0963">Cytoplasm</keyword>
<keyword id="KW-0238">DNA-binding</keyword>
<keyword id="KW-1185">Reference proteome</keyword>
<keyword id="KW-0804">Transcription</keyword>
<keyword id="KW-0805">Transcription regulation</keyword>
<gene>
    <name type="ordered locus">Strop_1792</name>
</gene>
<organism>
    <name type="scientific">Salinispora tropica (strain ATCC BAA-916 / DSM 44818 / JCM 13857 / NBRC 105044 / CNB-440)</name>
    <dbReference type="NCBI Taxonomy" id="369723"/>
    <lineage>
        <taxon>Bacteria</taxon>
        <taxon>Bacillati</taxon>
        <taxon>Actinomycetota</taxon>
        <taxon>Actinomycetes</taxon>
        <taxon>Micromonosporales</taxon>
        <taxon>Micromonosporaceae</taxon>
        <taxon>Salinispora</taxon>
    </lineage>
</organism>
<reference key="1">
    <citation type="journal article" date="2007" name="Proc. Natl. Acad. Sci. U.S.A.">
        <title>Genome sequencing reveals complex secondary metabolome in the marine actinomycete Salinispora tropica.</title>
        <authorList>
            <person name="Udwary D.W."/>
            <person name="Zeigler L."/>
            <person name="Asolkar R.N."/>
            <person name="Singan V."/>
            <person name="Lapidus A."/>
            <person name="Fenical W."/>
            <person name="Jensen P.R."/>
            <person name="Moore B.S."/>
        </authorList>
    </citation>
    <scope>NUCLEOTIDE SEQUENCE [LARGE SCALE GENOMIC DNA]</scope>
    <source>
        <strain>ATCC BAA-916 / DSM 44818 / JCM 13857 / NBRC 105044 / CNB-440</strain>
    </source>
</reference>
<dbReference type="EMBL" id="CP000667">
    <property type="protein sequence ID" value="ABP54255.1"/>
    <property type="molecule type" value="Genomic_DNA"/>
</dbReference>
<dbReference type="RefSeq" id="WP_011905686.1">
    <property type="nucleotide sequence ID" value="NC_009380.1"/>
</dbReference>
<dbReference type="SMR" id="A4X5V5"/>
<dbReference type="STRING" id="369723.Strop_1792"/>
<dbReference type="KEGG" id="stp:Strop_1792"/>
<dbReference type="PATRIC" id="fig|369723.5.peg.1839"/>
<dbReference type="eggNOG" id="COG0217">
    <property type="taxonomic scope" value="Bacteria"/>
</dbReference>
<dbReference type="HOGENOM" id="CLU_062974_2_2_11"/>
<dbReference type="Proteomes" id="UP000000235">
    <property type="component" value="Chromosome"/>
</dbReference>
<dbReference type="GO" id="GO:0005829">
    <property type="term" value="C:cytosol"/>
    <property type="evidence" value="ECO:0007669"/>
    <property type="project" value="TreeGrafter"/>
</dbReference>
<dbReference type="GO" id="GO:0003677">
    <property type="term" value="F:DNA binding"/>
    <property type="evidence" value="ECO:0007669"/>
    <property type="project" value="UniProtKB-UniRule"/>
</dbReference>
<dbReference type="GO" id="GO:0006355">
    <property type="term" value="P:regulation of DNA-templated transcription"/>
    <property type="evidence" value="ECO:0007669"/>
    <property type="project" value="UniProtKB-UniRule"/>
</dbReference>
<dbReference type="FunFam" id="1.10.10.200:FF:000002">
    <property type="entry name" value="Probable transcriptional regulatory protein CLM62_37755"/>
    <property type="match status" value="1"/>
</dbReference>
<dbReference type="Gene3D" id="1.10.10.200">
    <property type="match status" value="1"/>
</dbReference>
<dbReference type="Gene3D" id="3.30.70.980">
    <property type="match status" value="2"/>
</dbReference>
<dbReference type="HAMAP" id="MF_00693">
    <property type="entry name" value="Transcrip_reg_TACO1"/>
    <property type="match status" value="1"/>
</dbReference>
<dbReference type="InterPro" id="IPR017856">
    <property type="entry name" value="Integrase-like_N"/>
</dbReference>
<dbReference type="InterPro" id="IPR048300">
    <property type="entry name" value="TACO1_YebC-like_2nd/3rd_dom"/>
</dbReference>
<dbReference type="InterPro" id="IPR049083">
    <property type="entry name" value="TACO1_YebC_N"/>
</dbReference>
<dbReference type="InterPro" id="IPR002876">
    <property type="entry name" value="Transcrip_reg_TACO1-like"/>
</dbReference>
<dbReference type="InterPro" id="IPR026564">
    <property type="entry name" value="Transcrip_reg_TACO1-like_dom3"/>
</dbReference>
<dbReference type="InterPro" id="IPR029072">
    <property type="entry name" value="YebC-like"/>
</dbReference>
<dbReference type="NCBIfam" id="NF001030">
    <property type="entry name" value="PRK00110.1"/>
    <property type="match status" value="1"/>
</dbReference>
<dbReference type="NCBIfam" id="NF009044">
    <property type="entry name" value="PRK12378.1"/>
    <property type="match status" value="1"/>
</dbReference>
<dbReference type="NCBIfam" id="TIGR01033">
    <property type="entry name" value="YebC/PmpR family DNA-binding transcriptional regulator"/>
    <property type="match status" value="1"/>
</dbReference>
<dbReference type="PANTHER" id="PTHR12532:SF6">
    <property type="entry name" value="TRANSCRIPTIONAL REGULATORY PROTEIN YEBC-RELATED"/>
    <property type="match status" value="1"/>
</dbReference>
<dbReference type="PANTHER" id="PTHR12532">
    <property type="entry name" value="TRANSLATIONAL ACTIVATOR OF CYTOCHROME C OXIDASE 1"/>
    <property type="match status" value="1"/>
</dbReference>
<dbReference type="Pfam" id="PF20772">
    <property type="entry name" value="TACO1_YebC_N"/>
    <property type="match status" value="1"/>
</dbReference>
<dbReference type="Pfam" id="PF01709">
    <property type="entry name" value="Transcrip_reg"/>
    <property type="match status" value="1"/>
</dbReference>
<dbReference type="SUPFAM" id="SSF75625">
    <property type="entry name" value="YebC-like"/>
    <property type="match status" value="1"/>
</dbReference>